<gene>
    <name evidence="6" type="primary">Aass</name>
</gene>
<proteinExistence type="evidence at transcript level"/>
<protein>
    <recommendedName>
        <fullName evidence="3">Alpha-aminoadipic semialdehyde synthase, mitochondrial</fullName>
    </recommendedName>
    <alternativeName>
        <fullName evidence="3">LKR/SDH</fullName>
    </alternativeName>
    <domain>
        <recommendedName>
            <fullName evidence="3">Lysine ketoglutarate reductase</fullName>
            <shortName evidence="3">LKR</shortName>
            <shortName>LOR</shortName>
            <ecNumber evidence="3">1.5.1.8</ecNumber>
        </recommendedName>
    </domain>
    <domain>
        <recommendedName>
            <fullName evidence="3">Saccharopine dehydrogenase</fullName>
            <shortName evidence="3">SDH</shortName>
            <ecNumber evidence="3">1.5.1.9</ecNumber>
        </recommendedName>
    </domain>
</protein>
<feature type="transit peptide" description="Mitochondrion" evidence="4">
    <location>
        <begin position="1"/>
        <end position="27"/>
    </location>
</feature>
<feature type="chain" id="PRO_0000315868" description="Alpha-aminoadipic semialdehyde synthase, mitochondrial">
    <location>
        <begin position="28"/>
        <end position="926"/>
    </location>
</feature>
<feature type="region of interest" description="Lysine-ketoglutarate reductase" evidence="1">
    <location>
        <begin position="28"/>
        <end position="455"/>
    </location>
</feature>
<feature type="region of interest" description="Saccharopine dehydrogenase" evidence="1">
    <location>
        <begin position="477"/>
        <end position="926"/>
    </location>
</feature>
<feature type="binding site" evidence="3">
    <location>
        <position position="488"/>
    </location>
    <ligand>
        <name>NAD(+)</name>
        <dbReference type="ChEBI" id="CHEBI:57540"/>
    </ligand>
</feature>
<feature type="binding site" evidence="3">
    <location>
        <position position="512"/>
    </location>
    <ligand>
        <name>NAD(+)</name>
        <dbReference type="ChEBI" id="CHEBI:57540"/>
    </ligand>
</feature>
<feature type="binding site" evidence="3">
    <location>
        <position position="516"/>
    </location>
    <ligand>
        <name>NAD(+)</name>
        <dbReference type="ChEBI" id="CHEBI:57540"/>
    </ligand>
</feature>
<feature type="binding site" evidence="3">
    <location>
        <position position="554"/>
    </location>
    <ligand>
        <name>NAD(+)</name>
        <dbReference type="ChEBI" id="CHEBI:57540"/>
    </ligand>
</feature>
<feature type="binding site" evidence="3">
    <location>
        <position position="576"/>
    </location>
    <ligand>
        <name>NAD(+)</name>
        <dbReference type="ChEBI" id="CHEBI:57540"/>
    </ligand>
</feature>
<feature type="binding site" evidence="2">
    <location>
        <begin position="577"/>
        <end position="578"/>
    </location>
    <ligand>
        <name>L-saccharopine</name>
        <dbReference type="ChEBI" id="CHEBI:57951"/>
    </ligand>
</feature>
<feature type="binding site" evidence="3">
    <location>
        <position position="577"/>
    </location>
    <ligand>
        <name>NAD(+)</name>
        <dbReference type="ChEBI" id="CHEBI:57540"/>
    </ligand>
</feature>
<feature type="binding site" evidence="3">
    <location>
        <position position="603"/>
    </location>
    <ligand>
        <name>NAD(+)</name>
        <dbReference type="ChEBI" id="CHEBI:57540"/>
    </ligand>
</feature>
<feature type="binding site" evidence="2">
    <location>
        <position position="604"/>
    </location>
    <ligand>
        <name>L-saccharopine</name>
        <dbReference type="ChEBI" id="CHEBI:57951"/>
    </ligand>
</feature>
<feature type="binding site" evidence="3">
    <location>
        <position position="604"/>
    </location>
    <ligand>
        <name>NAD(+)</name>
        <dbReference type="ChEBI" id="CHEBI:57540"/>
    </ligand>
</feature>
<feature type="binding site" evidence="3">
    <location>
        <position position="605"/>
    </location>
    <ligand>
        <name>NAD(+)</name>
        <dbReference type="ChEBI" id="CHEBI:57540"/>
    </ligand>
</feature>
<feature type="binding site" evidence="2">
    <location>
        <position position="703"/>
    </location>
    <ligand>
        <name>L-saccharopine</name>
        <dbReference type="ChEBI" id="CHEBI:57951"/>
    </ligand>
</feature>
<feature type="binding site" evidence="2">
    <location>
        <begin position="724"/>
        <end position="726"/>
    </location>
    <ligand>
        <name>L-saccharopine</name>
        <dbReference type="ChEBI" id="CHEBI:57951"/>
    </ligand>
</feature>
<feature type="modified residue" description="N6-acetyllysine" evidence="1">
    <location>
        <position position="48"/>
    </location>
</feature>
<feature type="modified residue" description="N6-acetyllysine" evidence="1">
    <location>
        <position position="52"/>
    </location>
</feature>
<feature type="modified residue" description="N6-acetyllysine" evidence="1">
    <location>
        <position position="56"/>
    </location>
</feature>
<feature type="modified residue" description="N6-acetyllysine; alternate" evidence="1">
    <location>
        <position position="93"/>
    </location>
</feature>
<feature type="modified residue" description="N6-succinyllysine; alternate" evidence="1">
    <location>
        <position position="93"/>
    </location>
</feature>
<feature type="modified residue" description="N6-acetyllysine" evidence="1">
    <location>
        <position position="128"/>
    </location>
</feature>
<feature type="modified residue" description="N6-acetyllysine; alternate" evidence="1">
    <location>
        <position position="138"/>
    </location>
</feature>
<feature type="modified residue" description="N6-succinyllysine; alternate" evidence="1">
    <location>
        <position position="138"/>
    </location>
</feature>
<feature type="modified residue" description="N6-succinyllysine" evidence="1">
    <location>
        <position position="274"/>
    </location>
</feature>
<feature type="modified residue" description="N6-acetyllysine; alternate" evidence="1">
    <location>
        <position position="286"/>
    </location>
</feature>
<feature type="modified residue" description="N6-succinyllysine; alternate" evidence="1">
    <location>
        <position position="286"/>
    </location>
</feature>
<feature type="modified residue" description="N6-succinyllysine" evidence="1">
    <location>
        <position position="333"/>
    </location>
</feature>
<feature type="modified residue" description="N6-acetyllysine; alternate" evidence="1">
    <location>
        <position position="458"/>
    </location>
</feature>
<feature type="modified residue" description="N6-succinyllysine; alternate" evidence="1">
    <location>
        <position position="458"/>
    </location>
</feature>
<feature type="modified residue" description="N6-acetyllysine; alternate" evidence="1">
    <location>
        <position position="523"/>
    </location>
</feature>
<feature type="modified residue" description="N6-succinyllysine; alternate" evidence="1">
    <location>
        <position position="523"/>
    </location>
</feature>
<feature type="modified residue" description="N6-acetyllysine; alternate" evidence="1">
    <location>
        <position position="535"/>
    </location>
</feature>
<feature type="modified residue" description="N6-succinyllysine; alternate" evidence="1">
    <location>
        <position position="535"/>
    </location>
</feature>
<feature type="modified residue" description="N6-acetyllysine; alternate" evidence="1">
    <location>
        <position position="584"/>
    </location>
</feature>
<feature type="modified residue" description="N6-succinyllysine; alternate" evidence="1">
    <location>
        <position position="584"/>
    </location>
</feature>
<feature type="modified residue" description="N6-acetyllysine" evidence="1">
    <location>
        <position position="707"/>
    </location>
</feature>
<feature type="modified residue" description="N6-succinyllysine" evidence="1">
    <location>
        <position position="732"/>
    </location>
</feature>
<feature type="modified residue" description="N6-acetyllysine" evidence="1">
    <location>
        <position position="739"/>
    </location>
</feature>
<feature type="modified residue" description="N6-acetyllysine; alternate" evidence="1">
    <location>
        <position position="761"/>
    </location>
</feature>
<feature type="modified residue" description="N6-succinyllysine; alternate" evidence="1">
    <location>
        <position position="761"/>
    </location>
</feature>
<feature type="modified residue" description="N6-acetyllysine" evidence="1">
    <location>
        <position position="778"/>
    </location>
</feature>
<feature type="modified residue" description="N6-acetyllysine" evidence="1">
    <location>
        <position position="780"/>
    </location>
</feature>
<dbReference type="EC" id="1.5.1.8" evidence="3"/>
<dbReference type="EC" id="1.5.1.9" evidence="3"/>
<dbReference type="EMBL" id="BC128771">
    <property type="protein sequence ID" value="AAI28772.1"/>
    <property type="molecule type" value="mRNA"/>
</dbReference>
<dbReference type="RefSeq" id="NP_001094433.1">
    <property type="nucleotide sequence ID" value="NM_001100963.1"/>
</dbReference>
<dbReference type="SMR" id="A2VCW9"/>
<dbReference type="FunCoup" id="A2VCW9">
    <property type="interactions" value="215"/>
</dbReference>
<dbReference type="STRING" id="10116.ENSRNOP00000057271"/>
<dbReference type="GlyGen" id="A2VCW9">
    <property type="glycosylation" value="2 sites"/>
</dbReference>
<dbReference type="iPTMnet" id="A2VCW9"/>
<dbReference type="PhosphoSitePlus" id="A2VCW9"/>
<dbReference type="PaxDb" id="10116-ENSRNOP00000057271"/>
<dbReference type="PeptideAtlas" id="A2VCW9"/>
<dbReference type="GeneID" id="296925"/>
<dbReference type="KEGG" id="rno:296925"/>
<dbReference type="UCSC" id="RGD:1310811">
    <property type="organism name" value="rat"/>
</dbReference>
<dbReference type="AGR" id="RGD:1310811"/>
<dbReference type="CTD" id="10157"/>
<dbReference type="RGD" id="1310811">
    <property type="gene designation" value="Aass"/>
</dbReference>
<dbReference type="eggNOG" id="KOG0172">
    <property type="taxonomic scope" value="Eukaryota"/>
</dbReference>
<dbReference type="InParanoid" id="A2VCW9"/>
<dbReference type="OrthoDB" id="10294at9989"/>
<dbReference type="PhylomeDB" id="A2VCW9"/>
<dbReference type="Reactome" id="R-RNO-71064">
    <property type="pathway name" value="Lysine catabolism"/>
</dbReference>
<dbReference type="UniPathway" id="UPA00868">
    <property type="reaction ID" value="UER00835"/>
</dbReference>
<dbReference type="UniPathway" id="UPA00868">
    <property type="reaction ID" value="UER00836"/>
</dbReference>
<dbReference type="PRO" id="PR:A2VCW9"/>
<dbReference type="Proteomes" id="UP000002494">
    <property type="component" value="Unplaced"/>
</dbReference>
<dbReference type="GO" id="GO:0005737">
    <property type="term" value="C:cytoplasm"/>
    <property type="evidence" value="ECO:0000318"/>
    <property type="project" value="GO_Central"/>
</dbReference>
<dbReference type="GO" id="GO:0005739">
    <property type="term" value="C:mitochondrion"/>
    <property type="evidence" value="ECO:0007669"/>
    <property type="project" value="UniProtKB-SubCell"/>
</dbReference>
<dbReference type="GO" id="GO:0047131">
    <property type="term" value="F:saccharopine dehydrogenase (NAD+, L-glutamate-forming) activity"/>
    <property type="evidence" value="ECO:0000250"/>
    <property type="project" value="UniProtKB"/>
</dbReference>
<dbReference type="GO" id="GO:0047130">
    <property type="term" value="F:saccharopine dehydrogenase (NADP+, L-lysine-forming) activity"/>
    <property type="evidence" value="ECO:0000250"/>
    <property type="project" value="UniProtKB"/>
</dbReference>
<dbReference type="GO" id="GO:0004753">
    <property type="term" value="F:saccharopine dehydrogenase activity"/>
    <property type="evidence" value="ECO:0000318"/>
    <property type="project" value="GO_Central"/>
</dbReference>
<dbReference type="GO" id="GO:0019477">
    <property type="term" value="P:L-lysine catabolic process"/>
    <property type="evidence" value="ECO:0000266"/>
    <property type="project" value="RGD"/>
</dbReference>
<dbReference type="GO" id="GO:0033512">
    <property type="term" value="P:L-lysine catabolic process to acetyl-CoA via saccharopine"/>
    <property type="evidence" value="ECO:0007669"/>
    <property type="project" value="UniProtKB-UniPathway"/>
</dbReference>
<dbReference type="GO" id="GO:0019878">
    <property type="term" value="P:lysine biosynthetic process via aminoadipic acid"/>
    <property type="evidence" value="ECO:0000318"/>
    <property type="project" value="GO_Central"/>
</dbReference>
<dbReference type="GO" id="GO:0006554">
    <property type="term" value="P:lysine catabolic process"/>
    <property type="evidence" value="ECO:0000250"/>
    <property type="project" value="UniProtKB"/>
</dbReference>
<dbReference type="CDD" id="cd12189">
    <property type="entry name" value="LKR_SDH_like"/>
    <property type="match status" value="1"/>
</dbReference>
<dbReference type="FunFam" id="1.10.1870.10:FF:000001">
    <property type="entry name" value="Alpha-aminoadipic semialdehyde synthase, mitochondrial"/>
    <property type="match status" value="1"/>
</dbReference>
<dbReference type="FunFam" id="3.30.360.10:FF:000008">
    <property type="entry name" value="Alpha-aminoadipic semialdehyde synthase, mitochondrial"/>
    <property type="match status" value="1"/>
</dbReference>
<dbReference type="FunFam" id="3.40.50.720:FF:000087">
    <property type="entry name" value="alpha-aminoadipic semialdehyde synthase, mitochondrial"/>
    <property type="match status" value="1"/>
</dbReference>
<dbReference type="FunFam" id="3.40.50.720:FF:000072">
    <property type="entry name" value="Saccharopine dehydrogenase [NADP(+), L-glutamate-forming]"/>
    <property type="match status" value="1"/>
</dbReference>
<dbReference type="Gene3D" id="3.30.360.10">
    <property type="entry name" value="Dihydrodipicolinate Reductase, domain 2"/>
    <property type="match status" value="1"/>
</dbReference>
<dbReference type="Gene3D" id="1.10.1870.10">
    <property type="entry name" value="Domain 3, Saccharopine reductase"/>
    <property type="match status" value="1"/>
</dbReference>
<dbReference type="Gene3D" id="3.40.50.720">
    <property type="entry name" value="NAD(P)-binding Rossmann-like Domain"/>
    <property type="match status" value="3"/>
</dbReference>
<dbReference type="InterPro" id="IPR051168">
    <property type="entry name" value="AASS"/>
</dbReference>
<dbReference type="InterPro" id="IPR007886">
    <property type="entry name" value="AlaDH/PNT_N"/>
</dbReference>
<dbReference type="InterPro" id="IPR007698">
    <property type="entry name" value="AlaDH/PNT_NAD(H)-bd"/>
</dbReference>
<dbReference type="InterPro" id="IPR036291">
    <property type="entry name" value="NAD(P)-bd_dom_sf"/>
</dbReference>
<dbReference type="InterPro" id="IPR032095">
    <property type="entry name" value="Sacchrp_dh-like_C"/>
</dbReference>
<dbReference type="InterPro" id="IPR005097">
    <property type="entry name" value="Sacchrp_dh_NADP-bd"/>
</dbReference>
<dbReference type="PANTHER" id="PTHR11133:SF22">
    <property type="entry name" value="ALPHA-AMINOADIPIC SEMIALDEHYDE SYNTHASE, MITOCHONDRIAL"/>
    <property type="match status" value="1"/>
</dbReference>
<dbReference type="PANTHER" id="PTHR11133">
    <property type="entry name" value="SACCHAROPINE DEHYDROGENASE"/>
    <property type="match status" value="1"/>
</dbReference>
<dbReference type="Pfam" id="PF05222">
    <property type="entry name" value="AlaDh_PNT_N"/>
    <property type="match status" value="1"/>
</dbReference>
<dbReference type="Pfam" id="PF16653">
    <property type="entry name" value="Sacchrp_dh_C"/>
    <property type="match status" value="1"/>
</dbReference>
<dbReference type="Pfam" id="PF03435">
    <property type="entry name" value="Sacchrp_dh_NADP"/>
    <property type="match status" value="1"/>
</dbReference>
<dbReference type="SMART" id="SM01002">
    <property type="entry name" value="AlaDh_PNT_C"/>
    <property type="match status" value="1"/>
</dbReference>
<dbReference type="SMART" id="SM01003">
    <property type="entry name" value="AlaDh_PNT_N"/>
    <property type="match status" value="1"/>
</dbReference>
<dbReference type="SUPFAM" id="SSF52283">
    <property type="entry name" value="Formate/glycerate dehydrogenase catalytic domain-like"/>
    <property type="match status" value="1"/>
</dbReference>
<dbReference type="SUPFAM" id="SSF55347">
    <property type="entry name" value="Glyceraldehyde-3-phosphate dehydrogenase-like, C-terminal domain"/>
    <property type="match status" value="1"/>
</dbReference>
<dbReference type="SUPFAM" id="SSF51735">
    <property type="entry name" value="NAD(P)-binding Rossmann-fold domains"/>
    <property type="match status" value="1"/>
</dbReference>
<reference evidence="5" key="1">
    <citation type="journal article" date="2004" name="Genome Res.">
        <title>The status, quality, and expansion of the NIH full-length cDNA project: the Mammalian Gene Collection (MGC).</title>
        <authorList>
            <consortium name="The MGC Project Team"/>
        </authorList>
    </citation>
    <scope>NUCLEOTIDE SEQUENCE [LARGE SCALE MRNA]</scope>
    <source>
        <tissue evidence="5">Kidney</tissue>
    </source>
</reference>
<accession>A2VCW9</accession>
<name>AASS_RAT</name>
<keyword id="KW-0007">Acetylation</keyword>
<keyword id="KW-0496">Mitochondrion</keyword>
<keyword id="KW-0511">Multifunctional enzyme</keyword>
<keyword id="KW-0520">NAD</keyword>
<keyword id="KW-0521">NADP</keyword>
<keyword id="KW-0560">Oxidoreductase</keyword>
<keyword id="KW-1185">Reference proteome</keyword>
<keyword id="KW-0809">Transit peptide</keyword>
<sequence>MLRAQRLRLARLRACVSRGLHHKPVMALRREDVNAWERRAPLAPKHIKGITKLGYKVLIQPSNRRAIHDKEYVRAGGILQEDITEACLILGVKRPPEEKLMSKKTYAFFSHTIKAQEANMSLLDEVLKQEIRLIDYEKMVDHRGSRIVAFGHWAGVAGMINILHGMGLRLLALGHHTPFMHLGMAHNYRNSSQAVQAVRDAGYEISLGLMPKSIGPLTFVFTGTGNVSKGAQEVFNELPCEYVEPHELKEVSKTGDLRKVYGTVLSRHHHLVRKTDGVYDPVEYEKYPERYISRFNADIAPYTTCLINGIYWEQNTPRLLTRQDAQSLLVPVKSSVVPVEGCPELPHKLVAICDISADTGGSIDFMTECTTIERPFCMYDADQHIIHDSVEGSGILMCSIDNLPAQLPIEATEYFGDMLYPYVEEMLLSDASQPLESQNFSPVVRDAVITSNGLLTDKYKYIQKLRESRERIQFLSMSTKKKVLVLGSGYVSGPVLEYLSRGNNIEITLGSDMTNQMQQLSKKYDINTVNVTVGKQEDKLQSLVESQDLVISLLPYVLHPVVAKACIDSKVNMVTASYITPAMKELEKSVDDAGITVIGELGLDPGLDHMLAMETIDKAKDLGATIESYVSYCGGLPAPEHSDNPLRYKFSWSPVGVLMNIMQPASYLLNGKVVNVTGGVSFLNSVTPMDYFPGLNLEGYPNRDSTKYAEIYGISSAHTLLRGTLRYKGYSKALNGFVKLGLINRETYPALRPEANPLTWKQLLCDLVGISRSSSCEKLKEVVFTKLGGDSTQLEAAEWLGLLGDEQVPQAESIVDAFSKHLVSKLSYGPEEKDMIVMRDSFGIRHPSGHLENKTIDLVVYGDFNGFSAMAKTVGLPTAMAAKMLLDGEIETKGLMGPFSKEIYGPILERIKAEGIVFNTQSTIKL</sequence>
<evidence type="ECO:0000250" key="1">
    <source>
        <dbReference type="UniProtKB" id="Q99K67"/>
    </source>
</evidence>
<evidence type="ECO:0000250" key="2">
    <source>
        <dbReference type="UniProtKB" id="Q9P4R4"/>
    </source>
</evidence>
<evidence type="ECO:0000250" key="3">
    <source>
        <dbReference type="UniProtKB" id="Q9UDR5"/>
    </source>
</evidence>
<evidence type="ECO:0000255" key="4"/>
<evidence type="ECO:0000312" key="5">
    <source>
        <dbReference type="EMBL" id="AAI28772.1"/>
    </source>
</evidence>
<evidence type="ECO:0000312" key="6">
    <source>
        <dbReference type="RGD" id="1310811"/>
    </source>
</evidence>
<comment type="function">
    <text evidence="3">Bifunctional enzyme that catalyzes the first two steps in lysine degradation.</text>
</comment>
<comment type="catalytic activity">
    <reaction evidence="3">
        <text>L-saccharopine + NADP(+) + H2O = L-lysine + 2-oxoglutarate + NADPH + H(+)</text>
        <dbReference type="Rhea" id="RHEA:19373"/>
        <dbReference type="ChEBI" id="CHEBI:15377"/>
        <dbReference type="ChEBI" id="CHEBI:15378"/>
        <dbReference type="ChEBI" id="CHEBI:16810"/>
        <dbReference type="ChEBI" id="CHEBI:32551"/>
        <dbReference type="ChEBI" id="CHEBI:57783"/>
        <dbReference type="ChEBI" id="CHEBI:57951"/>
        <dbReference type="ChEBI" id="CHEBI:58349"/>
        <dbReference type="EC" id="1.5.1.8"/>
    </reaction>
    <physiologicalReaction direction="right-to-left" evidence="3">
        <dbReference type="Rhea" id="RHEA:19375"/>
    </physiologicalReaction>
</comment>
<comment type="catalytic activity">
    <reaction evidence="3">
        <text>L-saccharopine + NAD(+) + H2O = (S)-2-amino-6-oxohexanoate + L-glutamate + NADH + H(+)</text>
        <dbReference type="Rhea" id="RHEA:24520"/>
        <dbReference type="ChEBI" id="CHEBI:15377"/>
        <dbReference type="ChEBI" id="CHEBI:15378"/>
        <dbReference type="ChEBI" id="CHEBI:29985"/>
        <dbReference type="ChEBI" id="CHEBI:57540"/>
        <dbReference type="ChEBI" id="CHEBI:57945"/>
        <dbReference type="ChEBI" id="CHEBI:57951"/>
        <dbReference type="ChEBI" id="CHEBI:58321"/>
        <dbReference type="EC" id="1.5.1.9"/>
    </reaction>
    <physiologicalReaction direction="left-to-right" evidence="3">
        <dbReference type="Rhea" id="RHEA:24521"/>
    </physiologicalReaction>
</comment>
<comment type="pathway">
    <text evidence="3">Amino-acid degradation; L-lysine degradation via saccharopine pathway; glutaryl-CoA from L-lysine: step 1/6.</text>
</comment>
<comment type="pathway">
    <text evidence="3">Amino-acid degradation; L-lysine degradation via saccharopine pathway; glutaryl-CoA from L-lysine: step 2/6.</text>
</comment>
<comment type="subunit">
    <text evidence="1">Homotetramer.</text>
</comment>
<comment type="subcellular location">
    <subcellularLocation>
        <location evidence="3">Mitochondrion</location>
    </subcellularLocation>
</comment>
<comment type="domain">
    <text evidence="3">The N-terminal and the C-terminal domains contain respectively the lysine ketoglutarate reductase and saccharopine dehydrogenase activity.</text>
</comment>
<comment type="similarity">
    <text evidence="4">In the N-terminal section; belongs to the AlaDH/PNT family.</text>
</comment>
<comment type="similarity">
    <text evidence="4">In the C-terminal section; belongs to the saccharopine dehydrogenase family.</text>
</comment>
<organism>
    <name type="scientific">Rattus norvegicus</name>
    <name type="common">Rat</name>
    <dbReference type="NCBI Taxonomy" id="10116"/>
    <lineage>
        <taxon>Eukaryota</taxon>
        <taxon>Metazoa</taxon>
        <taxon>Chordata</taxon>
        <taxon>Craniata</taxon>
        <taxon>Vertebrata</taxon>
        <taxon>Euteleostomi</taxon>
        <taxon>Mammalia</taxon>
        <taxon>Eutheria</taxon>
        <taxon>Euarchontoglires</taxon>
        <taxon>Glires</taxon>
        <taxon>Rodentia</taxon>
        <taxon>Myomorpha</taxon>
        <taxon>Muroidea</taxon>
        <taxon>Muridae</taxon>
        <taxon>Murinae</taxon>
        <taxon>Rattus</taxon>
    </lineage>
</organism>